<organism>
    <name type="scientific">Rhizobium meliloti (strain 1021)</name>
    <name type="common">Ensifer meliloti</name>
    <name type="synonym">Sinorhizobium meliloti</name>
    <dbReference type="NCBI Taxonomy" id="266834"/>
    <lineage>
        <taxon>Bacteria</taxon>
        <taxon>Pseudomonadati</taxon>
        <taxon>Pseudomonadota</taxon>
        <taxon>Alphaproteobacteria</taxon>
        <taxon>Hyphomicrobiales</taxon>
        <taxon>Rhizobiaceae</taxon>
        <taxon>Sinorhizobium/Ensifer group</taxon>
        <taxon>Sinorhizobium</taxon>
    </lineage>
</organism>
<comment type="function">
    <text>Part of a K(+) efflux system which is required for the adaptation of R.meliloti to alkaline pH as well as for the infection process during symbiotic nodule development.</text>
</comment>
<comment type="subunit">
    <text>May form a hetero-oligomeric complex that consists of six subunits: PhaAB, PhaC, PhaD, PhaE, PhaF and PhaG.</text>
</comment>
<comment type="subcellular location">
    <subcellularLocation>
        <location evidence="2">Cell membrane</location>
        <topology evidence="2">Multi-pass membrane protein</topology>
    </subcellularLocation>
</comment>
<comment type="similarity">
    <text evidence="2">Belongs to the CPA3 antiporters (TC 2.A.63) subunit D family.</text>
</comment>
<comment type="sequence caution" evidence="2">
    <conflict type="erroneous initiation">
        <sequence resource="EMBL-CDS" id="CAA63737"/>
    </conflict>
</comment>
<protein>
    <recommendedName>
        <fullName>Probable K(+)/H(+) antiporter subunit D</fullName>
    </recommendedName>
    <alternativeName>
        <fullName>pH adaptation potassium efflux system protein D</fullName>
        <shortName>Pha system subunit D</shortName>
    </alternativeName>
</protein>
<reference key="1">
    <citation type="journal article" date="1998" name="Mol. Microbiol.">
        <title>The pha gene cluster of Rhizobium meliloti involved in pH adaptation and symbiosis encodes a novel type of K+ efflux system.</title>
        <authorList>
            <person name="Putnoky P."/>
            <person name="Kereszt A."/>
            <person name="Nakamura T."/>
            <person name="Endre G."/>
            <person name="Grosskopf E."/>
            <person name="Kiss P."/>
            <person name="Kondorosi A."/>
        </authorList>
    </citation>
    <scope>NUCLEOTIDE SEQUENCE [GENOMIC DNA]</scope>
    <source>
        <strain>41</strain>
    </source>
</reference>
<reference key="2">
    <citation type="journal article" date="2001" name="Proc. Natl. Acad. Sci. U.S.A.">
        <title>Analysis of the chromosome sequence of the legume symbiont Sinorhizobium meliloti strain 1021.</title>
        <authorList>
            <person name="Capela D."/>
            <person name="Barloy-Hubler F."/>
            <person name="Gouzy J."/>
            <person name="Bothe G."/>
            <person name="Ampe F."/>
            <person name="Batut J."/>
            <person name="Boistard P."/>
            <person name="Becker A."/>
            <person name="Boutry M."/>
            <person name="Cadieu E."/>
            <person name="Dreano S."/>
            <person name="Gloux S."/>
            <person name="Godrie T."/>
            <person name="Goffeau A."/>
            <person name="Kahn D."/>
            <person name="Kiss E."/>
            <person name="Lelaure V."/>
            <person name="Masuy D."/>
            <person name="Pohl T."/>
            <person name="Portetelle D."/>
            <person name="Puehler A."/>
            <person name="Purnelle B."/>
            <person name="Ramsperger U."/>
            <person name="Renard C."/>
            <person name="Thebault P."/>
            <person name="Vandenbol M."/>
            <person name="Weidner S."/>
            <person name="Galibert F."/>
        </authorList>
    </citation>
    <scope>NUCLEOTIDE SEQUENCE [LARGE SCALE GENOMIC DNA]</scope>
    <source>
        <strain>1021</strain>
    </source>
</reference>
<reference key="3">
    <citation type="journal article" date="2001" name="Science">
        <title>The composite genome of the legume symbiont Sinorhizobium meliloti.</title>
        <authorList>
            <person name="Galibert F."/>
            <person name="Finan T.M."/>
            <person name="Long S.R."/>
            <person name="Puehler A."/>
            <person name="Abola P."/>
            <person name="Ampe F."/>
            <person name="Barloy-Hubler F."/>
            <person name="Barnett M.J."/>
            <person name="Becker A."/>
            <person name="Boistard P."/>
            <person name="Bothe G."/>
            <person name="Boutry M."/>
            <person name="Bowser L."/>
            <person name="Buhrmester J."/>
            <person name="Cadieu E."/>
            <person name="Capela D."/>
            <person name="Chain P."/>
            <person name="Cowie A."/>
            <person name="Davis R.W."/>
            <person name="Dreano S."/>
            <person name="Federspiel N.A."/>
            <person name="Fisher R.F."/>
            <person name="Gloux S."/>
            <person name="Godrie T."/>
            <person name="Goffeau A."/>
            <person name="Golding B."/>
            <person name="Gouzy J."/>
            <person name="Gurjal M."/>
            <person name="Hernandez-Lucas I."/>
            <person name="Hong A."/>
            <person name="Huizar L."/>
            <person name="Hyman R.W."/>
            <person name="Jones T."/>
            <person name="Kahn D."/>
            <person name="Kahn M.L."/>
            <person name="Kalman S."/>
            <person name="Keating D.H."/>
            <person name="Kiss E."/>
            <person name="Komp C."/>
            <person name="Lelaure V."/>
            <person name="Masuy D."/>
            <person name="Palm C."/>
            <person name="Peck M.C."/>
            <person name="Pohl T.M."/>
            <person name="Portetelle D."/>
            <person name="Purnelle B."/>
            <person name="Ramsperger U."/>
            <person name="Surzycki R."/>
            <person name="Thebault P."/>
            <person name="Vandenbol M."/>
            <person name="Vorhoelter F.J."/>
            <person name="Weidner S."/>
            <person name="Wells D.H."/>
            <person name="Wong K."/>
            <person name="Yeh K.-C."/>
            <person name="Batut J."/>
        </authorList>
    </citation>
    <scope>NUCLEOTIDE SEQUENCE [LARGE SCALE GENOMIC DNA]</scope>
    <source>
        <strain>1021</strain>
    </source>
</reference>
<gene>
    <name type="primary">phaD</name>
    <name type="synonym">phaD1</name>
    <name type="ordered locus">R02912</name>
    <name type="ORF">SMc03181</name>
</gene>
<proteinExistence type="inferred from homology"/>
<feature type="chain" id="PRO_0000217085" description="Probable K(+)/H(+) antiporter subunit D">
    <location>
        <begin position="1"/>
        <end position="539"/>
    </location>
</feature>
<feature type="transmembrane region" description="Helical" evidence="1">
    <location>
        <begin position="4"/>
        <end position="23"/>
    </location>
</feature>
<feature type="transmembrane region" description="Helical" evidence="1">
    <location>
        <begin position="36"/>
        <end position="58"/>
    </location>
</feature>
<feature type="transmembrane region" description="Helical" evidence="1">
    <location>
        <begin position="78"/>
        <end position="100"/>
    </location>
</feature>
<feature type="transmembrane region" description="Helical" evidence="1">
    <location>
        <begin position="113"/>
        <end position="135"/>
    </location>
</feature>
<feature type="transmembrane region" description="Helical" evidence="1">
    <location>
        <begin position="140"/>
        <end position="162"/>
    </location>
</feature>
<feature type="transmembrane region" description="Helical" evidence="1">
    <location>
        <begin position="175"/>
        <end position="197"/>
    </location>
</feature>
<feature type="transmembrane region" description="Helical" evidence="1">
    <location>
        <begin position="217"/>
        <end position="239"/>
    </location>
</feature>
<feature type="transmembrane region" description="Helical" evidence="1">
    <location>
        <begin position="251"/>
        <end position="273"/>
    </location>
</feature>
<feature type="transmembrane region" description="Helical" evidence="1">
    <location>
        <begin position="283"/>
        <end position="305"/>
    </location>
</feature>
<feature type="transmembrane region" description="Helical" evidence="1">
    <location>
        <begin position="312"/>
        <end position="331"/>
    </location>
</feature>
<feature type="transmembrane region" description="Helical" evidence="1">
    <location>
        <begin position="335"/>
        <end position="357"/>
    </location>
</feature>
<feature type="transmembrane region" description="Helical" evidence="1">
    <location>
        <begin position="400"/>
        <end position="422"/>
    </location>
</feature>
<feature type="transmembrane region" description="Helical" evidence="1">
    <location>
        <begin position="442"/>
        <end position="464"/>
    </location>
</feature>
<feature type="transmembrane region" description="Helical" evidence="1">
    <location>
        <begin position="484"/>
        <end position="506"/>
    </location>
</feature>
<keyword id="KW-0050">Antiport</keyword>
<keyword id="KW-1003">Cell membrane</keyword>
<keyword id="KW-0375">Hydrogen ion transport</keyword>
<keyword id="KW-0406">Ion transport</keyword>
<keyword id="KW-0472">Membrane</keyword>
<keyword id="KW-0630">Potassium</keyword>
<keyword id="KW-0633">Potassium transport</keyword>
<keyword id="KW-1185">Reference proteome</keyword>
<keyword id="KW-0812">Transmembrane</keyword>
<keyword id="KW-1133">Transmembrane helix</keyword>
<keyword id="KW-0813">Transport</keyword>
<dbReference type="EMBL" id="X93358">
    <property type="protein sequence ID" value="CAA63737.1"/>
    <property type="status" value="ALT_INIT"/>
    <property type="molecule type" value="Genomic_DNA"/>
</dbReference>
<dbReference type="EMBL" id="AL591688">
    <property type="protein sequence ID" value="CAC47491.1"/>
    <property type="molecule type" value="Genomic_DNA"/>
</dbReference>
<dbReference type="RefSeq" id="NP_387018.1">
    <property type="nucleotide sequence ID" value="NC_003047.1"/>
</dbReference>
<dbReference type="RefSeq" id="WP_013844865.1">
    <property type="nucleotide sequence ID" value="NC_003047.1"/>
</dbReference>
<dbReference type="SMR" id="Q52981"/>
<dbReference type="TCDB" id="2.A.63.1.1">
    <property type="family name" value="the monovalent cation (k(+) or na(+)):proton antiporter-3 (cpa3) family"/>
</dbReference>
<dbReference type="EnsemblBacteria" id="CAC47491">
    <property type="protein sequence ID" value="CAC47491"/>
    <property type="gene ID" value="SMc03181"/>
</dbReference>
<dbReference type="KEGG" id="sme:SMc03181"/>
<dbReference type="PATRIC" id="fig|266834.11.peg.4433"/>
<dbReference type="eggNOG" id="COG0651">
    <property type="taxonomic scope" value="Bacteria"/>
</dbReference>
<dbReference type="HOGENOM" id="CLU_007100_9_2_5"/>
<dbReference type="OrthoDB" id="9768329at2"/>
<dbReference type="Proteomes" id="UP000001976">
    <property type="component" value="Chromosome"/>
</dbReference>
<dbReference type="GO" id="GO:0005886">
    <property type="term" value="C:plasma membrane"/>
    <property type="evidence" value="ECO:0007669"/>
    <property type="project" value="UniProtKB-SubCell"/>
</dbReference>
<dbReference type="GO" id="GO:0015386">
    <property type="term" value="F:potassium:proton antiporter activity"/>
    <property type="evidence" value="ECO:0007669"/>
    <property type="project" value="InterPro"/>
</dbReference>
<dbReference type="InterPro" id="IPR050586">
    <property type="entry name" value="CPA3_Na-H_Antiporter_D"/>
</dbReference>
<dbReference type="InterPro" id="IPR004775">
    <property type="entry name" value="MnhD1"/>
</dbReference>
<dbReference type="InterPro" id="IPR001750">
    <property type="entry name" value="ND/Mrp_TM"/>
</dbReference>
<dbReference type="NCBIfam" id="TIGR00944">
    <property type="entry name" value="2a6301s04"/>
    <property type="match status" value="1"/>
</dbReference>
<dbReference type="NCBIfam" id="NF009309">
    <property type="entry name" value="PRK12666.1"/>
    <property type="match status" value="1"/>
</dbReference>
<dbReference type="PANTHER" id="PTHR42703:SF1">
    <property type="entry name" value="NA(+)_H(+) ANTIPORTER SUBUNIT D1"/>
    <property type="match status" value="1"/>
</dbReference>
<dbReference type="PANTHER" id="PTHR42703">
    <property type="entry name" value="NADH DEHYDROGENASE"/>
    <property type="match status" value="1"/>
</dbReference>
<dbReference type="Pfam" id="PF00361">
    <property type="entry name" value="Proton_antipo_M"/>
    <property type="match status" value="1"/>
</dbReference>
<name>PHAD_RHIME</name>
<sequence length="539" mass="56303">MTDWLDHLLILPILLPLAVAAVLIPINERDRTLKGAIGFASTLVVFILSMILMRLAAAGTGSLPGSGVYQLGNWPAPFGIVLVLDRLSALMLCLTSGLALAAQAYSMARWHTAGHHFHSLFQLLVAGLNGAFLTGDLFNLFVFFEMMLAASYGLLLHGSGPLRVKAGLHYIAVNLAASALFLIGVSLIYGAAGTLNMADLATKLAALEPRSRTLVEMGSAILGVAFLVKAGMWPLSFWLPTAYAAATPPVAGVFAVLTKVGIYVIIRLHLLVFGTAAGASSGFGQEWLVTGGMLTIAFGGIGVLASQAMGRLAGYSVLVSSGTLLAAVGLGHDGMLAGALFYLVSSTLTIGAFFLLIELVERGRDAGADVLAVTMEAYGDFDEDEEEEEVGAAIPGTMAVLGLCFCLCALLLAGLPPLSGFIAKFALISGLFDMPAAELATAMSAADWTYVTLLILSGLAAMIAMNRIGIRTFWASIEGTIPRVVVIEITPVVVLLGACIFLSLQAGPAMRYMQATADDLLAPLTHSERVLSAPRAGSQ</sequence>
<accession>Q52981</accession>
<accession>Q92LV6</accession>
<evidence type="ECO:0000255" key="1"/>
<evidence type="ECO:0000305" key="2"/>